<sequence>MTDALSEEQIAEFKEAFSLFDKDGDGTITTKELGTVMRSLGQNPTEAELQDMINEVDADGNGTIDFPEFLTMMARKMKETDSEEEIREAFRVFDKDGNGFISAAELRHVMTNLGEKLTDEEVDEMIREADIDGDGQVNYEEFVAMMTSK</sequence>
<proteinExistence type="evidence at transcript level"/>
<evidence type="ECO:0000250" key="1"/>
<evidence type="ECO:0000255" key="2">
    <source>
        <dbReference type="PROSITE-ProRule" id="PRU00448"/>
    </source>
</evidence>
<evidence type="ECO:0000305" key="3"/>
<name>CALM_HALOK</name>
<feature type="initiator methionine" description="Removed" evidence="1">
    <location>
        <position position="1"/>
    </location>
</feature>
<feature type="chain" id="PRO_0000198253" description="Calmodulin">
    <location>
        <begin position="2"/>
        <end position="149"/>
    </location>
</feature>
<feature type="domain" description="EF-hand 1" evidence="2">
    <location>
        <begin position="8"/>
        <end position="43"/>
    </location>
</feature>
<feature type="domain" description="EF-hand 2" evidence="2">
    <location>
        <begin position="44"/>
        <end position="79"/>
    </location>
</feature>
<feature type="domain" description="EF-hand 3" evidence="2">
    <location>
        <begin position="81"/>
        <end position="116"/>
    </location>
</feature>
<feature type="domain" description="EF-hand 4" evidence="2">
    <location>
        <begin position="117"/>
        <end position="149"/>
    </location>
</feature>
<feature type="binding site" evidence="2">
    <location>
        <position position="21"/>
    </location>
    <ligand>
        <name>Ca(2+)</name>
        <dbReference type="ChEBI" id="CHEBI:29108"/>
        <label>1</label>
    </ligand>
</feature>
<feature type="binding site" evidence="2">
    <location>
        <position position="23"/>
    </location>
    <ligand>
        <name>Ca(2+)</name>
        <dbReference type="ChEBI" id="CHEBI:29108"/>
        <label>1</label>
    </ligand>
</feature>
<feature type="binding site" evidence="2">
    <location>
        <position position="25"/>
    </location>
    <ligand>
        <name>Ca(2+)</name>
        <dbReference type="ChEBI" id="CHEBI:29108"/>
        <label>1</label>
    </ligand>
</feature>
<feature type="binding site" evidence="2">
    <location>
        <position position="27"/>
    </location>
    <ligand>
        <name>Ca(2+)</name>
        <dbReference type="ChEBI" id="CHEBI:29108"/>
        <label>1</label>
    </ligand>
</feature>
<feature type="binding site" evidence="2">
    <location>
        <position position="32"/>
    </location>
    <ligand>
        <name>Ca(2+)</name>
        <dbReference type="ChEBI" id="CHEBI:29108"/>
        <label>1</label>
    </ligand>
</feature>
<feature type="binding site" evidence="2">
    <location>
        <position position="57"/>
    </location>
    <ligand>
        <name>Ca(2+)</name>
        <dbReference type="ChEBI" id="CHEBI:29108"/>
        <label>2</label>
    </ligand>
</feature>
<feature type="binding site" evidence="2">
    <location>
        <position position="59"/>
    </location>
    <ligand>
        <name>Ca(2+)</name>
        <dbReference type="ChEBI" id="CHEBI:29108"/>
        <label>2</label>
    </ligand>
</feature>
<feature type="binding site" evidence="2">
    <location>
        <position position="61"/>
    </location>
    <ligand>
        <name>Ca(2+)</name>
        <dbReference type="ChEBI" id="CHEBI:29108"/>
        <label>2</label>
    </ligand>
</feature>
<feature type="binding site" evidence="2">
    <location>
        <position position="63"/>
    </location>
    <ligand>
        <name>Ca(2+)</name>
        <dbReference type="ChEBI" id="CHEBI:29108"/>
        <label>2</label>
    </ligand>
</feature>
<feature type="binding site" evidence="2">
    <location>
        <position position="68"/>
    </location>
    <ligand>
        <name>Ca(2+)</name>
        <dbReference type="ChEBI" id="CHEBI:29108"/>
        <label>2</label>
    </ligand>
</feature>
<feature type="binding site" evidence="2">
    <location>
        <position position="94"/>
    </location>
    <ligand>
        <name>Ca(2+)</name>
        <dbReference type="ChEBI" id="CHEBI:29108"/>
        <label>3</label>
    </ligand>
</feature>
<feature type="binding site" evidence="2">
    <location>
        <position position="96"/>
    </location>
    <ligand>
        <name>Ca(2+)</name>
        <dbReference type="ChEBI" id="CHEBI:29108"/>
        <label>3</label>
    </ligand>
</feature>
<feature type="binding site" evidence="2">
    <location>
        <position position="98"/>
    </location>
    <ligand>
        <name>Ca(2+)</name>
        <dbReference type="ChEBI" id="CHEBI:29108"/>
        <label>3</label>
    </ligand>
</feature>
<feature type="binding site" evidence="2">
    <location>
        <position position="105"/>
    </location>
    <ligand>
        <name>Ca(2+)</name>
        <dbReference type="ChEBI" id="CHEBI:29108"/>
        <label>3</label>
    </ligand>
</feature>
<feature type="binding site" evidence="2">
    <location>
        <position position="130"/>
    </location>
    <ligand>
        <name>Ca(2+)</name>
        <dbReference type="ChEBI" id="CHEBI:29108"/>
        <label>4</label>
    </ligand>
</feature>
<feature type="binding site" evidence="2">
    <location>
        <position position="132"/>
    </location>
    <ligand>
        <name>Ca(2+)</name>
        <dbReference type="ChEBI" id="CHEBI:29108"/>
        <label>4</label>
    </ligand>
</feature>
<feature type="binding site" evidence="2">
    <location>
        <position position="134"/>
    </location>
    <ligand>
        <name>Ca(2+)</name>
        <dbReference type="ChEBI" id="CHEBI:29108"/>
        <label>4</label>
    </ligand>
</feature>
<feature type="binding site" evidence="2">
    <location>
        <position position="136"/>
    </location>
    <ligand>
        <name>Ca(2+)</name>
        <dbReference type="ChEBI" id="CHEBI:29108"/>
        <label>4</label>
    </ligand>
</feature>
<feature type="binding site" evidence="2">
    <location>
        <position position="141"/>
    </location>
    <ligand>
        <name>Ca(2+)</name>
        <dbReference type="ChEBI" id="CHEBI:29108"/>
        <label>4</label>
    </ligand>
</feature>
<feature type="modified residue" description="N-acetylthreonine" evidence="1">
    <location>
        <position position="2"/>
    </location>
</feature>
<feature type="modified residue" description="N6,N6,N6-trimethyllysine" evidence="1">
    <location>
        <position position="116"/>
    </location>
</feature>
<organism>
    <name type="scientific">Halichondria okadai</name>
    <name type="common">Marine sponge</name>
    <name type="synonym">Reniera okadai</name>
    <dbReference type="NCBI Taxonomy" id="163232"/>
    <lineage>
        <taxon>Eukaryota</taxon>
        <taxon>Metazoa</taxon>
        <taxon>Porifera</taxon>
        <taxon>Demospongiae</taxon>
        <taxon>Heteroscleromorpha</taxon>
        <taxon>Suberitida</taxon>
        <taxon>Halichondriidae</taxon>
        <taxon>Halichondria</taxon>
        <taxon>Halichondria (Halichondria)</taxon>
    </lineage>
</organism>
<accession>Q95NI4</accession>
<protein>
    <recommendedName>
        <fullName>Calmodulin</fullName>
        <shortName>CaM</shortName>
    </recommendedName>
</protein>
<keyword id="KW-0007">Acetylation</keyword>
<keyword id="KW-0106">Calcium</keyword>
<keyword id="KW-0479">Metal-binding</keyword>
<keyword id="KW-0488">Methylation</keyword>
<keyword id="KW-0677">Repeat</keyword>
<dbReference type="EMBL" id="AB063182">
    <property type="protein sequence ID" value="BAB61795.1"/>
    <property type="molecule type" value="mRNA"/>
</dbReference>
<dbReference type="EMBL" id="AB063184">
    <property type="protein sequence ID" value="BAB61797.1"/>
    <property type="molecule type" value="Genomic_DNA"/>
</dbReference>
<dbReference type="SMR" id="Q95NI4"/>
<dbReference type="GO" id="GO:0016460">
    <property type="term" value="C:myosin II complex"/>
    <property type="evidence" value="ECO:0007669"/>
    <property type="project" value="TreeGrafter"/>
</dbReference>
<dbReference type="GO" id="GO:0005509">
    <property type="term" value="F:calcium ion binding"/>
    <property type="evidence" value="ECO:0007669"/>
    <property type="project" value="InterPro"/>
</dbReference>
<dbReference type="CDD" id="cd00051">
    <property type="entry name" value="EFh"/>
    <property type="match status" value="2"/>
</dbReference>
<dbReference type="FunFam" id="1.10.238.10:FF:000527">
    <property type="entry name" value="Calmodulin-3"/>
    <property type="match status" value="1"/>
</dbReference>
<dbReference type="Gene3D" id="1.10.238.10">
    <property type="entry name" value="EF-hand"/>
    <property type="match status" value="3"/>
</dbReference>
<dbReference type="InterPro" id="IPR050230">
    <property type="entry name" value="CALM/Myosin/TropC-like"/>
</dbReference>
<dbReference type="InterPro" id="IPR011992">
    <property type="entry name" value="EF-hand-dom_pair"/>
</dbReference>
<dbReference type="InterPro" id="IPR018247">
    <property type="entry name" value="EF_Hand_1_Ca_BS"/>
</dbReference>
<dbReference type="InterPro" id="IPR002048">
    <property type="entry name" value="EF_hand_dom"/>
</dbReference>
<dbReference type="PANTHER" id="PTHR23048:SF0">
    <property type="entry name" value="CALMODULIN LIKE 3"/>
    <property type="match status" value="1"/>
</dbReference>
<dbReference type="PANTHER" id="PTHR23048">
    <property type="entry name" value="MYOSIN LIGHT CHAIN 1, 3"/>
    <property type="match status" value="1"/>
</dbReference>
<dbReference type="Pfam" id="PF13499">
    <property type="entry name" value="EF-hand_7"/>
    <property type="match status" value="2"/>
</dbReference>
<dbReference type="SMART" id="SM00054">
    <property type="entry name" value="EFh"/>
    <property type="match status" value="4"/>
</dbReference>
<dbReference type="SUPFAM" id="SSF47473">
    <property type="entry name" value="EF-hand"/>
    <property type="match status" value="1"/>
</dbReference>
<dbReference type="PROSITE" id="PS00018">
    <property type="entry name" value="EF_HAND_1"/>
    <property type="match status" value="4"/>
</dbReference>
<dbReference type="PROSITE" id="PS50222">
    <property type="entry name" value="EF_HAND_2"/>
    <property type="match status" value="4"/>
</dbReference>
<comment type="function">
    <text>Calmodulin mediates the control of a large number of enzymes, ion channels and other proteins by Ca(2+). Among the enzymes to be stimulated by the calmodulin-Ca(2+) complex are a number of protein kinases and phosphatases.</text>
</comment>
<comment type="miscellaneous">
    <text>This protein has four functional calcium-binding sites.</text>
</comment>
<comment type="similarity">
    <text evidence="3">Belongs to the calmodulin family.</text>
</comment>
<reference key="1">
    <citation type="journal article" date="2001" name="Gene">
        <title>Structural organization of lower marine nonvertebrate calmodulin genes.</title>
        <authorList>
            <person name="Yuasa H.J."/>
            <person name="Suzuki T."/>
            <person name="Yazawa M."/>
        </authorList>
    </citation>
    <scope>NUCLEOTIDE SEQUENCE [GENOMIC DNA / MRNA]</scope>
</reference>